<keyword id="KW-0963">Cytoplasm</keyword>
<keyword id="KW-0489">Methyltransferase</keyword>
<keyword id="KW-0949">S-adenosyl-L-methionine</keyword>
<keyword id="KW-0808">Transferase</keyword>
<keyword id="KW-0819">tRNA processing</keyword>
<evidence type="ECO:0000255" key="1">
    <source>
        <dbReference type="HAMAP-Rule" id="MF_00605"/>
    </source>
</evidence>
<evidence type="ECO:0000305" key="2"/>
<gene>
    <name evidence="1" type="primary">trmD</name>
    <name type="ordered locus">SAK_1385</name>
</gene>
<proteinExistence type="inferred from homology"/>
<comment type="function">
    <text evidence="1">Specifically methylates guanosine-37 in various tRNAs.</text>
</comment>
<comment type="catalytic activity">
    <reaction evidence="1">
        <text>guanosine(37) in tRNA + S-adenosyl-L-methionine = N(1)-methylguanosine(37) in tRNA + S-adenosyl-L-homocysteine + H(+)</text>
        <dbReference type="Rhea" id="RHEA:36899"/>
        <dbReference type="Rhea" id="RHEA-COMP:10145"/>
        <dbReference type="Rhea" id="RHEA-COMP:10147"/>
        <dbReference type="ChEBI" id="CHEBI:15378"/>
        <dbReference type="ChEBI" id="CHEBI:57856"/>
        <dbReference type="ChEBI" id="CHEBI:59789"/>
        <dbReference type="ChEBI" id="CHEBI:73542"/>
        <dbReference type="ChEBI" id="CHEBI:74269"/>
        <dbReference type="EC" id="2.1.1.228"/>
    </reaction>
</comment>
<comment type="subunit">
    <text evidence="1">Homodimer.</text>
</comment>
<comment type="subcellular location">
    <subcellularLocation>
        <location evidence="1">Cytoplasm</location>
    </subcellularLocation>
</comment>
<comment type="similarity">
    <text evidence="1">Belongs to the RNA methyltransferase TrmD family.</text>
</comment>
<comment type="sequence caution" evidence="2">
    <conflict type="erroneous initiation">
        <sequence resource="EMBL-CDS" id="ABA45180"/>
    </conflict>
</comment>
<feature type="chain" id="PRO_0000257477" description="tRNA (guanine-N(1)-)-methyltransferase">
    <location>
        <begin position="1"/>
        <end position="250"/>
    </location>
</feature>
<feature type="binding site" evidence="1">
    <location>
        <position position="108"/>
    </location>
    <ligand>
        <name>S-adenosyl-L-methionine</name>
        <dbReference type="ChEBI" id="CHEBI:59789"/>
    </ligand>
</feature>
<feature type="binding site" evidence="1">
    <location>
        <begin position="127"/>
        <end position="132"/>
    </location>
    <ligand>
        <name>S-adenosyl-L-methionine</name>
        <dbReference type="ChEBI" id="CHEBI:59789"/>
    </ligand>
</feature>
<accession>Q3K0F8</accession>
<protein>
    <recommendedName>
        <fullName evidence="1">tRNA (guanine-N(1)-)-methyltransferase</fullName>
        <ecNumber evidence="1">2.1.1.228</ecNumber>
    </recommendedName>
    <alternativeName>
        <fullName evidence="1">M1G-methyltransferase</fullName>
    </alternativeName>
    <alternativeName>
        <fullName evidence="1">tRNA [GM37] methyltransferase</fullName>
    </alternativeName>
</protein>
<name>TRMD_STRA1</name>
<dbReference type="EC" id="2.1.1.228" evidence="1"/>
<dbReference type="EMBL" id="CP000114">
    <property type="protein sequence ID" value="ABA45180.1"/>
    <property type="status" value="ALT_INIT"/>
    <property type="molecule type" value="Genomic_DNA"/>
</dbReference>
<dbReference type="SMR" id="Q3K0F8"/>
<dbReference type="KEGG" id="sak:SAK_1385"/>
<dbReference type="HOGENOM" id="CLU_047363_0_1_9"/>
<dbReference type="GO" id="GO:0005829">
    <property type="term" value="C:cytosol"/>
    <property type="evidence" value="ECO:0007669"/>
    <property type="project" value="TreeGrafter"/>
</dbReference>
<dbReference type="GO" id="GO:0052906">
    <property type="term" value="F:tRNA (guanine(37)-N1)-methyltransferase activity"/>
    <property type="evidence" value="ECO:0007669"/>
    <property type="project" value="UniProtKB-UniRule"/>
</dbReference>
<dbReference type="GO" id="GO:0002939">
    <property type="term" value="P:tRNA N1-guanine methylation"/>
    <property type="evidence" value="ECO:0007669"/>
    <property type="project" value="TreeGrafter"/>
</dbReference>
<dbReference type="CDD" id="cd18080">
    <property type="entry name" value="TrmD-like"/>
    <property type="match status" value="1"/>
</dbReference>
<dbReference type="FunFam" id="1.10.1270.20:FF:000001">
    <property type="entry name" value="tRNA (guanine-N(1)-)-methyltransferase"/>
    <property type="match status" value="1"/>
</dbReference>
<dbReference type="FunFam" id="3.40.1280.10:FF:000001">
    <property type="entry name" value="tRNA (guanine-N(1)-)-methyltransferase"/>
    <property type="match status" value="1"/>
</dbReference>
<dbReference type="Gene3D" id="3.40.1280.10">
    <property type="match status" value="1"/>
</dbReference>
<dbReference type="Gene3D" id="1.10.1270.20">
    <property type="entry name" value="tRNA(m1g37)methyltransferase, domain 2"/>
    <property type="match status" value="1"/>
</dbReference>
<dbReference type="HAMAP" id="MF_00605">
    <property type="entry name" value="TrmD"/>
    <property type="match status" value="1"/>
</dbReference>
<dbReference type="InterPro" id="IPR029028">
    <property type="entry name" value="Alpha/beta_knot_MTases"/>
</dbReference>
<dbReference type="InterPro" id="IPR023148">
    <property type="entry name" value="tRNA_m1G_MeTrfase_C_sf"/>
</dbReference>
<dbReference type="InterPro" id="IPR002649">
    <property type="entry name" value="tRNA_m1G_MeTrfase_TrmD"/>
</dbReference>
<dbReference type="InterPro" id="IPR029026">
    <property type="entry name" value="tRNA_m1G_MTases_N"/>
</dbReference>
<dbReference type="InterPro" id="IPR016009">
    <property type="entry name" value="tRNA_MeTrfase_TRMD/TRM10"/>
</dbReference>
<dbReference type="NCBIfam" id="NF000648">
    <property type="entry name" value="PRK00026.1"/>
    <property type="match status" value="1"/>
</dbReference>
<dbReference type="NCBIfam" id="TIGR00088">
    <property type="entry name" value="trmD"/>
    <property type="match status" value="1"/>
</dbReference>
<dbReference type="PANTHER" id="PTHR46417">
    <property type="entry name" value="TRNA (GUANINE-N(1)-)-METHYLTRANSFERASE"/>
    <property type="match status" value="1"/>
</dbReference>
<dbReference type="PANTHER" id="PTHR46417:SF1">
    <property type="entry name" value="TRNA (GUANINE-N(1)-)-METHYLTRANSFERASE"/>
    <property type="match status" value="1"/>
</dbReference>
<dbReference type="Pfam" id="PF01746">
    <property type="entry name" value="tRNA_m1G_MT"/>
    <property type="match status" value="1"/>
</dbReference>
<dbReference type="PIRSF" id="PIRSF000386">
    <property type="entry name" value="tRNA_mtase"/>
    <property type="match status" value="1"/>
</dbReference>
<dbReference type="SUPFAM" id="SSF75217">
    <property type="entry name" value="alpha/beta knot"/>
    <property type="match status" value="1"/>
</dbReference>
<sequence length="250" mass="28738">MKIDILTLFPEMFAPLEHSIVGKAKERGLLEINYHNFRENAEKSRHVDDEPYGGGQGMLLRAQPIFDTIDKIDAQKARVILLDPAGRTFDQDFAEELSKEDELIFICGHYEGYDERIKSLVTDEVSLGDFVLTGGELAAMTMVDATVRLIPEVIGKETSHQDDSFSSGLLEYPQYTRPYDYLGMTVPDVLMSGHHENIRKWRLEQSLRKTLERRPDLLENYAMTDEERLILEKIKTEIERTDTVNEQNNL</sequence>
<organism>
    <name type="scientific">Streptococcus agalactiae serotype Ia (strain ATCC 27591 / A909 / CDC SS700)</name>
    <dbReference type="NCBI Taxonomy" id="205921"/>
    <lineage>
        <taxon>Bacteria</taxon>
        <taxon>Bacillati</taxon>
        <taxon>Bacillota</taxon>
        <taxon>Bacilli</taxon>
        <taxon>Lactobacillales</taxon>
        <taxon>Streptococcaceae</taxon>
        <taxon>Streptococcus</taxon>
    </lineage>
</organism>
<reference key="1">
    <citation type="journal article" date="2005" name="Proc. Natl. Acad. Sci. U.S.A.">
        <title>Genome analysis of multiple pathogenic isolates of Streptococcus agalactiae: implications for the microbial 'pan-genome'.</title>
        <authorList>
            <person name="Tettelin H."/>
            <person name="Masignani V."/>
            <person name="Cieslewicz M.J."/>
            <person name="Donati C."/>
            <person name="Medini D."/>
            <person name="Ward N.L."/>
            <person name="Angiuoli S.V."/>
            <person name="Crabtree J."/>
            <person name="Jones A.L."/>
            <person name="Durkin A.S."/>
            <person name="DeBoy R.T."/>
            <person name="Davidsen T.M."/>
            <person name="Mora M."/>
            <person name="Scarselli M."/>
            <person name="Margarit y Ros I."/>
            <person name="Peterson J.D."/>
            <person name="Hauser C.R."/>
            <person name="Sundaram J.P."/>
            <person name="Nelson W.C."/>
            <person name="Madupu R."/>
            <person name="Brinkac L.M."/>
            <person name="Dodson R.J."/>
            <person name="Rosovitz M.J."/>
            <person name="Sullivan S.A."/>
            <person name="Daugherty S.C."/>
            <person name="Haft D.H."/>
            <person name="Selengut J."/>
            <person name="Gwinn M.L."/>
            <person name="Zhou L."/>
            <person name="Zafar N."/>
            <person name="Khouri H."/>
            <person name="Radune D."/>
            <person name="Dimitrov G."/>
            <person name="Watkins K."/>
            <person name="O'Connor K.J."/>
            <person name="Smith S."/>
            <person name="Utterback T.R."/>
            <person name="White O."/>
            <person name="Rubens C.E."/>
            <person name="Grandi G."/>
            <person name="Madoff L.C."/>
            <person name="Kasper D.L."/>
            <person name="Telford J.L."/>
            <person name="Wessels M.R."/>
            <person name="Rappuoli R."/>
            <person name="Fraser C.M."/>
        </authorList>
    </citation>
    <scope>NUCLEOTIDE SEQUENCE [LARGE SCALE GENOMIC DNA]</scope>
    <source>
        <strain>ATCC 27591 / A909 / CDC SS700</strain>
    </source>
</reference>